<name>AKR1_NAUCA</name>
<gene>
    <name type="primary">AKR1</name>
    <name type="ordered locus">NCAS_0C05280</name>
</gene>
<organism>
    <name type="scientific">Naumovozyma castellii</name>
    <name type="common">Yeast</name>
    <name type="synonym">Saccharomyces castellii</name>
    <dbReference type="NCBI Taxonomy" id="27288"/>
    <lineage>
        <taxon>Eukaryota</taxon>
        <taxon>Fungi</taxon>
        <taxon>Dikarya</taxon>
        <taxon>Ascomycota</taxon>
        <taxon>Saccharomycotina</taxon>
        <taxon>Saccharomycetes</taxon>
        <taxon>Saccharomycetales</taxon>
        <taxon>Saccharomycetaceae</taxon>
        <taxon>Naumovozyma</taxon>
    </lineage>
</organism>
<protein>
    <recommendedName>
        <fullName>Palmitoyltransferase AKR1</fullName>
        <ecNumber>2.3.1.225</ecNumber>
    </recommendedName>
    <alternativeName>
        <fullName>Ankyrin repeat-containing protein AKR1</fullName>
    </alternativeName>
</protein>
<accession>Q876A6</accession>
<accession>G0VDF6</accession>
<accession>Q876A7</accession>
<feature type="chain" id="PRO_0000212929" description="Palmitoyltransferase AKR1">
    <location>
        <begin position="1"/>
        <end position="757"/>
    </location>
</feature>
<feature type="topological domain" description="Cytoplasmic" evidence="2">
    <location>
        <begin position="1"/>
        <end position="307"/>
    </location>
</feature>
<feature type="transmembrane region" description="Helical" evidence="2">
    <location>
        <begin position="308"/>
        <end position="328"/>
    </location>
</feature>
<feature type="topological domain" description="Lumenal" evidence="2">
    <location>
        <begin position="329"/>
        <end position="331"/>
    </location>
</feature>
<feature type="transmembrane region" description="Helical" evidence="2">
    <location>
        <begin position="332"/>
        <end position="352"/>
    </location>
</feature>
<feature type="topological domain" description="Cytoplasmic" evidence="2">
    <location>
        <begin position="353"/>
        <end position="375"/>
    </location>
</feature>
<feature type="transmembrane region" description="Helical" evidence="2">
    <location>
        <begin position="376"/>
        <end position="396"/>
    </location>
</feature>
<feature type="topological domain" description="Lumenal" evidence="2">
    <location>
        <begin position="397"/>
        <end position="402"/>
    </location>
</feature>
<feature type="transmembrane region" description="Helical" evidence="2">
    <location>
        <begin position="403"/>
        <end position="423"/>
    </location>
</feature>
<feature type="topological domain" description="Cytoplasmic" evidence="2">
    <location>
        <begin position="424"/>
        <end position="498"/>
    </location>
</feature>
<feature type="transmembrane region" description="Helical" evidence="2">
    <location>
        <begin position="499"/>
        <end position="519"/>
    </location>
</feature>
<feature type="topological domain" description="Lumenal" evidence="2">
    <location>
        <begin position="520"/>
        <end position="550"/>
    </location>
</feature>
<feature type="transmembrane region" description="Helical" evidence="2">
    <location>
        <begin position="551"/>
        <end position="571"/>
    </location>
</feature>
<feature type="topological domain" description="Cytoplasmic" evidence="2">
    <location>
        <begin position="572"/>
        <end position="757"/>
    </location>
</feature>
<feature type="repeat" description="ANK 1">
    <location>
        <begin position="58"/>
        <end position="88"/>
    </location>
</feature>
<feature type="repeat" description="ANK 2">
    <location>
        <begin position="92"/>
        <end position="121"/>
    </location>
</feature>
<feature type="repeat" description="ANK 3">
    <location>
        <begin position="126"/>
        <end position="155"/>
    </location>
</feature>
<feature type="repeat" description="ANK 4">
    <location>
        <begin position="159"/>
        <end position="188"/>
    </location>
</feature>
<feature type="repeat" description="ANK 5">
    <location>
        <begin position="197"/>
        <end position="226"/>
    </location>
</feature>
<feature type="repeat" description="ANK 6">
    <location>
        <begin position="230"/>
        <end position="259"/>
    </location>
</feature>
<feature type="domain" description="DHHC" evidence="3">
    <location>
        <begin position="455"/>
        <end position="505"/>
    </location>
</feature>
<feature type="region of interest" description="Disordered" evidence="4">
    <location>
        <begin position="1"/>
        <end position="54"/>
    </location>
</feature>
<feature type="region of interest" description="Disordered" evidence="4">
    <location>
        <begin position="614"/>
        <end position="647"/>
    </location>
</feature>
<feature type="compositionally biased region" description="Polar residues" evidence="4">
    <location>
        <begin position="1"/>
        <end position="20"/>
    </location>
</feature>
<feature type="compositionally biased region" description="Polar residues" evidence="4">
    <location>
        <begin position="36"/>
        <end position="46"/>
    </location>
</feature>
<feature type="compositionally biased region" description="Polar residues" evidence="4">
    <location>
        <begin position="624"/>
        <end position="646"/>
    </location>
</feature>
<feature type="active site" description="S-palmitoyl cysteine intermediate" evidence="1">
    <location>
        <position position="485"/>
    </location>
</feature>
<feature type="sequence conflict" description="In Ref. 1; AAO32472." evidence="5" ref="1">
    <original>NVMLVAYVLFFVVA</original>
    <variation>EVHVVEFLLPVLFF</variation>
    <location>
        <begin position="172"/>
        <end position="185"/>
    </location>
</feature>
<sequence length="757" mass="85371">MSDINTESGESTSLPNSTDPPLSDVNIDVEDDDTAESISSLQPIVSNTTNPPEEPINPVLGQYHQACQKGDLATVKQLLDSGVLDLNTDLTGDITGLHWASINNRLSVVKYLISQGIDVNAKAGDLEATPLHWAARYGYVHIVDCLLNKGADPTMCDMQGFNLLHLAVNSSNVMLVAYVLFFVVAKGIIDIDCQDPKGRTPLLWAAYQGDSLSVMLLLKFGASTKIVDEGGFTPLHWATVKGQPYVLTHLIRDGADFFLKTNDGKDCFTIAQEMNTSHSFKDALSICGFNQDGYPKRKLFKKSDHAKVITFFVPLVALSIIFILFTHLHPLFALLISLIFGLAVNKALKELILPSYSNYGLHSTSLLKSPFLSGTFFGSLLLLTIVWIFKIAPFTIFKSRLLTNFFMFLILMQIYYLFIKLIFSDPGCVPIETDHENVRGTIKELLDTGKFDIKNFCLETWIRKPLRSHFSTLNTHNVARFDHFCPWIYNDIGLKNHKNFMWFILLTEVGIWFFISLTMKYFDILEDTNEDVACFLLGDDELCAGFVYDRFTFLIALWALIQSVWVGFLIVVQVFQTFTGVTNKEFNKYVKEKKNQHAFDPIFFNDTFNTTPEELRNDDDDTAASRTGNNPNHSNGTTIPSEGSRINTRKPRTCFNLCFAITGLDQVRTIVRETLGIGGANEMSRMQLLSSIPTNYGWKRNLADFWLTSDVMAPIWRRLFYSPVESRALLNGVEVDYFKLYDFPEKTYPEPTGPESV</sequence>
<proteinExistence type="inferred from homology"/>
<comment type="function">
    <text evidence="1">Palmitoyltransferase specific for casein kinase 1.</text>
</comment>
<comment type="catalytic activity">
    <reaction>
        <text>L-cysteinyl-[protein] + hexadecanoyl-CoA = S-hexadecanoyl-L-cysteinyl-[protein] + CoA</text>
        <dbReference type="Rhea" id="RHEA:36683"/>
        <dbReference type="Rhea" id="RHEA-COMP:10131"/>
        <dbReference type="Rhea" id="RHEA-COMP:11032"/>
        <dbReference type="ChEBI" id="CHEBI:29950"/>
        <dbReference type="ChEBI" id="CHEBI:57287"/>
        <dbReference type="ChEBI" id="CHEBI:57379"/>
        <dbReference type="ChEBI" id="CHEBI:74151"/>
        <dbReference type="EC" id="2.3.1.225"/>
    </reaction>
</comment>
<comment type="subcellular location">
    <subcellularLocation>
        <location>Early endosome membrane</location>
        <topology>Multi-pass membrane protein</topology>
    </subcellularLocation>
    <subcellularLocation>
        <location evidence="1">Golgi apparatus membrane</location>
        <topology evidence="1">Multi-pass membrane protein</topology>
    </subcellularLocation>
</comment>
<comment type="domain">
    <text evidence="1">The DHHC domain is required for palmitoyltransferase activity.</text>
</comment>
<comment type="similarity">
    <text evidence="5">Belongs to the DHHC palmitoyltransferase family. AKR/ZDHHC17 subfamily.</text>
</comment>
<evidence type="ECO:0000250" key="1"/>
<evidence type="ECO:0000255" key="2"/>
<evidence type="ECO:0000255" key="3">
    <source>
        <dbReference type="PROSITE-ProRule" id="PRU00067"/>
    </source>
</evidence>
<evidence type="ECO:0000256" key="4">
    <source>
        <dbReference type="SAM" id="MobiDB-lite"/>
    </source>
</evidence>
<evidence type="ECO:0000305" key="5"/>
<keyword id="KW-0012">Acyltransferase</keyword>
<keyword id="KW-0040">ANK repeat</keyword>
<keyword id="KW-0967">Endosome</keyword>
<keyword id="KW-0333">Golgi apparatus</keyword>
<keyword id="KW-0449">Lipoprotein</keyword>
<keyword id="KW-0472">Membrane</keyword>
<keyword id="KW-0564">Palmitate</keyword>
<keyword id="KW-1185">Reference proteome</keyword>
<keyword id="KW-0677">Repeat</keyword>
<keyword id="KW-0808">Transferase</keyword>
<keyword id="KW-0812">Transmembrane</keyword>
<keyword id="KW-1133">Transmembrane helix</keyword>
<reference key="1">
    <citation type="submission" date="2011-07" db="EMBL/GenBank/DDBJ databases">
        <title>Genome sequence of Naumovozyma castellii.</title>
        <authorList>
            <person name="Gordon J.L."/>
            <person name="Armisen D."/>
            <person name="Proux-Wera E."/>
            <person name="OhEigeartaigh S.S."/>
            <person name="Byrne K.P."/>
            <person name="Wolfe K.H."/>
        </authorList>
    </citation>
    <scope>NUCLEOTIDE SEQUENCE [LARGE SCALE GENOMIC DNA] OF 1-156 AND 172-757</scope>
    <source>
        <strain>ATCC 76901 / BCRC 22586 / CBS 4309 / NBRC 1992 / NRRL Y-12630</strain>
    </source>
</reference>
<reference key="2">
    <citation type="journal article" date="2003" name="Nature">
        <title>Yeast genome duplication was followed by asynchronous differentiation of duplicated genes.</title>
        <authorList>
            <person name="Langkjaer R.B."/>
            <person name="Cliften P.F."/>
            <person name="Johnston M."/>
            <person name="Piskur J."/>
        </authorList>
    </citation>
    <scope>NUCLEOTIDE SEQUENCE [GENOMIC DNA]</scope>
    <source>
        <strain>ATCC 76901 / BCRC 22586 / CBS 4309 / NBRC 1992 / NRRL Y-12630</strain>
    </source>
</reference>
<dbReference type="EC" id="2.3.1.225"/>
<dbReference type="EMBL" id="HE576754">
    <property type="protein sequence ID" value="CCC69518.1"/>
    <property type="molecule type" value="Genomic_DNA"/>
</dbReference>
<dbReference type="EMBL" id="AY144909">
    <property type="protein sequence ID" value="AAO32473.1"/>
    <property type="molecule type" value="Genomic_DNA"/>
</dbReference>
<dbReference type="EMBL" id="AY144908">
    <property type="protein sequence ID" value="AAO32472.1"/>
    <property type="molecule type" value="Genomic_DNA"/>
</dbReference>
<dbReference type="SMR" id="Q876A6"/>
<dbReference type="FunCoup" id="Q876A6">
    <property type="interactions" value="636"/>
</dbReference>
<dbReference type="STRING" id="1064592.Q876A6"/>
<dbReference type="KEGG" id="ncs:NCAS_0C05280"/>
<dbReference type="eggNOG" id="KOG0509">
    <property type="taxonomic scope" value="Eukaryota"/>
</dbReference>
<dbReference type="HOGENOM" id="CLU_012510_1_1_1"/>
<dbReference type="InParanoid" id="Q876A6"/>
<dbReference type="OMA" id="FWVGFRY"/>
<dbReference type="OrthoDB" id="6781668at2759"/>
<dbReference type="Proteomes" id="UP000001640">
    <property type="component" value="Chromosome 3"/>
</dbReference>
<dbReference type="GO" id="GO:0031901">
    <property type="term" value="C:early endosome membrane"/>
    <property type="evidence" value="ECO:0007669"/>
    <property type="project" value="UniProtKB-SubCell"/>
</dbReference>
<dbReference type="GO" id="GO:0000139">
    <property type="term" value="C:Golgi membrane"/>
    <property type="evidence" value="ECO:0007669"/>
    <property type="project" value="UniProtKB-SubCell"/>
</dbReference>
<dbReference type="GO" id="GO:0031683">
    <property type="term" value="F:G-protein beta/gamma-subunit complex binding"/>
    <property type="evidence" value="ECO:0007669"/>
    <property type="project" value="EnsemblFungi"/>
</dbReference>
<dbReference type="GO" id="GO:0019706">
    <property type="term" value="F:protein-cysteine S-palmitoyltransferase activity"/>
    <property type="evidence" value="ECO:0007669"/>
    <property type="project" value="UniProtKB-EC"/>
</dbReference>
<dbReference type="GO" id="GO:0090029">
    <property type="term" value="P:negative regulation of pheromone-dependent signal transduction involved in conjugation with cellular fusion"/>
    <property type="evidence" value="ECO:0007669"/>
    <property type="project" value="EnsemblFungi"/>
</dbReference>
<dbReference type="GO" id="GO:0006612">
    <property type="term" value="P:protein targeting to membrane"/>
    <property type="evidence" value="ECO:0007669"/>
    <property type="project" value="EnsemblFungi"/>
</dbReference>
<dbReference type="GO" id="GO:0030100">
    <property type="term" value="P:regulation of endocytosis"/>
    <property type="evidence" value="ECO:0007669"/>
    <property type="project" value="EnsemblFungi"/>
</dbReference>
<dbReference type="FunFam" id="1.25.40.20:FF:000301">
    <property type="entry name" value="Palmitoyltransferase"/>
    <property type="match status" value="1"/>
</dbReference>
<dbReference type="Gene3D" id="1.25.40.20">
    <property type="entry name" value="Ankyrin repeat-containing domain"/>
    <property type="match status" value="1"/>
</dbReference>
<dbReference type="InterPro" id="IPR002110">
    <property type="entry name" value="Ankyrin_rpt"/>
</dbReference>
<dbReference type="InterPro" id="IPR036770">
    <property type="entry name" value="Ankyrin_rpt-contain_sf"/>
</dbReference>
<dbReference type="InterPro" id="IPR001594">
    <property type="entry name" value="Palmitoyltrfase_DHHC"/>
</dbReference>
<dbReference type="PANTHER" id="PTHR24161">
    <property type="entry name" value="ANK_REP_REGION DOMAIN-CONTAINING PROTEIN-RELATED"/>
    <property type="match status" value="1"/>
</dbReference>
<dbReference type="PANTHER" id="PTHR24161:SF85">
    <property type="entry name" value="PALMITOYLTRANSFERASE HIP14"/>
    <property type="match status" value="1"/>
</dbReference>
<dbReference type="Pfam" id="PF12796">
    <property type="entry name" value="Ank_2"/>
    <property type="match status" value="1"/>
</dbReference>
<dbReference type="Pfam" id="PF13637">
    <property type="entry name" value="Ank_4"/>
    <property type="match status" value="1"/>
</dbReference>
<dbReference type="Pfam" id="PF01529">
    <property type="entry name" value="DHHC"/>
    <property type="match status" value="1"/>
</dbReference>
<dbReference type="SMART" id="SM00248">
    <property type="entry name" value="ANK"/>
    <property type="match status" value="6"/>
</dbReference>
<dbReference type="SUPFAM" id="SSF48403">
    <property type="entry name" value="Ankyrin repeat"/>
    <property type="match status" value="1"/>
</dbReference>
<dbReference type="PROSITE" id="PS50297">
    <property type="entry name" value="ANK_REP_REGION"/>
    <property type="match status" value="1"/>
</dbReference>
<dbReference type="PROSITE" id="PS50088">
    <property type="entry name" value="ANK_REPEAT"/>
    <property type="match status" value="4"/>
</dbReference>
<dbReference type="PROSITE" id="PS50216">
    <property type="entry name" value="DHHC"/>
    <property type="match status" value="1"/>
</dbReference>